<sequence>MASSNLIKQLQERGLVAQVTDEDALAERLAQGPIALYCGFDPTADSLHLGHLVPLLCLKRFQQAGHKPVALVGGATGLIGDPSFKAAERKLNTEETVQEWVAKIRKQVAPFLDFDCGENSAIAANNYDWFGSMNVLTFLRDIGKHFSVNQMINKEAVKQRLNRDDQGISFTEFSYNLLQGYDFACLNKLHGVALQIGGSDQWGNITSGIDLTRRLHQNQVFGLTVPLITKADGTKFGKTEGGAVWLDPKKTSPYKFYQFWINTADADVYRFLKFFTFMDIEEINALEEEDKNSGKAPRAQYVLAEQVTRLVHGEEGLVAAKRITECLFSGSLSALSEADFEQLAQDGVPMVEMEKGADLMQALVDAELQPSRGQARKTIASNAVTINGEKQSDPEYIFNDEDRLFGRYTLLRRGKKNYCLICWK</sequence>
<reference key="1">
    <citation type="journal article" date="2008" name="Genome Res.">
        <title>Comparative genome analysis of Salmonella enteritidis PT4 and Salmonella gallinarum 287/91 provides insights into evolutionary and host adaptation pathways.</title>
        <authorList>
            <person name="Thomson N.R."/>
            <person name="Clayton D.J."/>
            <person name="Windhorst D."/>
            <person name="Vernikos G."/>
            <person name="Davidson S."/>
            <person name="Churcher C."/>
            <person name="Quail M.A."/>
            <person name="Stevens M."/>
            <person name="Jones M.A."/>
            <person name="Watson M."/>
            <person name="Barron A."/>
            <person name="Layton A."/>
            <person name="Pickard D."/>
            <person name="Kingsley R.A."/>
            <person name="Bignell A."/>
            <person name="Clark L."/>
            <person name="Harris B."/>
            <person name="Ormond D."/>
            <person name="Abdellah Z."/>
            <person name="Brooks K."/>
            <person name="Cherevach I."/>
            <person name="Chillingworth T."/>
            <person name="Woodward J."/>
            <person name="Norberczak H."/>
            <person name="Lord A."/>
            <person name="Arrowsmith C."/>
            <person name="Jagels K."/>
            <person name="Moule S."/>
            <person name="Mungall K."/>
            <person name="Saunders M."/>
            <person name="Whitehead S."/>
            <person name="Chabalgoity J.A."/>
            <person name="Maskell D."/>
            <person name="Humphreys T."/>
            <person name="Roberts M."/>
            <person name="Barrow P.A."/>
            <person name="Dougan G."/>
            <person name="Parkhill J."/>
        </authorList>
    </citation>
    <scope>NUCLEOTIDE SEQUENCE [LARGE SCALE GENOMIC DNA]</scope>
    <source>
        <strain>287/91 / NCTC 13346</strain>
    </source>
</reference>
<feature type="chain" id="PRO_1000189324" description="Tyrosine--tRNA ligase">
    <location>
        <begin position="1"/>
        <end position="424"/>
    </location>
</feature>
<feature type="domain" description="S4 RNA-binding" evidence="1">
    <location>
        <begin position="357"/>
        <end position="414"/>
    </location>
</feature>
<feature type="short sequence motif" description="'HIGH' region">
    <location>
        <begin position="42"/>
        <end position="51"/>
    </location>
</feature>
<feature type="short sequence motif" description="'KMSKS' region">
    <location>
        <begin position="235"/>
        <end position="239"/>
    </location>
</feature>
<feature type="binding site" evidence="1">
    <location>
        <position position="37"/>
    </location>
    <ligand>
        <name>L-tyrosine</name>
        <dbReference type="ChEBI" id="CHEBI:58315"/>
    </ligand>
</feature>
<feature type="binding site" evidence="1">
    <location>
        <position position="175"/>
    </location>
    <ligand>
        <name>L-tyrosine</name>
        <dbReference type="ChEBI" id="CHEBI:58315"/>
    </ligand>
</feature>
<feature type="binding site" evidence="1">
    <location>
        <position position="179"/>
    </location>
    <ligand>
        <name>L-tyrosine</name>
        <dbReference type="ChEBI" id="CHEBI:58315"/>
    </ligand>
</feature>
<feature type="binding site" evidence="1">
    <location>
        <position position="238"/>
    </location>
    <ligand>
        <name>ATP</name>
        <dbReference type="ChEBI" id="CHEBI:30616"/>
    </ligand>
</feature>
<comment type="function">
    <text evidence="1">Catalyzes the attachment of tyrosine to tRNA(Tyr) in a two-step reaction: tyrosine is first activated by ATP to form Tyr-AMP and then transferred to the acceptor end of tRNA(Tyr).</text>
</comment>
<comment type="catalytic activity">
    <reaction evidence="1">
        <text>tRNA(Tyr) + L-tyrosine + ATP = L-tyrosyl-tRNA(Tyr) + AMP + diphosphate + H(+)</text>
        <dbReference type="Rhea" id="RHEA:10220"/>
        <dbReference type="Rhea" id="RHEA-COMP:9706"/>
        <dbReference type="Rhea" id="RHEA-COMP:9707"/>
        <dbReference type="ChEBI" id="CHEBI:15378"/>
        <dbReference type="ChEBI" id="CHEBI:30616"/>
        <dbReference type="ChEBI" id="CHEBI:33019"/>
        <dbReference type="ChEBI" id="CHEBI:58315"/>
        <dbReference type="ChEBI" id="CHEBI:78442"/>
        <dbReference type="ChEBI" id="CHEBI:78536"/>
        <dbReference type="ChEBI" id="CHEBI:456215"/>
        <dbReference type="EC" id="6.1.1.1"/>
    </reaction>
</comment>
<comment type="subunit">
    <text evidence="1">Homodimer.</text>
</comment>
<comment type="subcellular location">
    <subcellularLocation>
        <location evidence="1">Cytoplasm</location>
    </subcellularLocation>
</comment>
<comment type="similarity">
    <text evidence="1">Belongs to the class-I aminoacyl-tRNA synthetase family. TyrS type 1 subfamily.</text>
</comment>
<protein>
    <recommendedName>
        <fullName evidence="1">Tyrosine--tRNA ligase</fullName>
        <ecNumber evidence="1">6.1.1.1</ecNumber>
    </recommendedName>
    <alternativeName>
        <fullName evidence="1">Tyrosyl-tRNA synthetase</fullName>
        <shortName evidence="1">TyrRS</shortName>
    </alternativeName>
</protein>
<dbReference type="EC" id="6.1.1.1" evidence="1"/>
<dbReference type="EMBL" id="AM933173">
    <property type="protein sequence ID" value="CAR37528.1"/>
    <property type="molecule type" value="Genomic_DNA"/>
</dbReference>
<dbReference type="RefSeq" id="WP_000168626.1">
    <property type="nucleotide sequence ID" value="NC_011274.1"/>
</dbReference>
<dbReference type="SMR" id="B5RAL0"/>
<dbReference type="KEGG" id="seg:SG1669"/>
<dbReference type="HOGENOM" id="CLU_024003_0_3_6"/>
<dbReference type="Proteomes" id="UP000008321">
    <property type="component" value="Chromosome"/>
</dbReference>
<dbReference type="GO" id="GO:0005829">
    <property type="term" value="C:cytosol"/>
    <property type="evidence" value="ECO:0007669"/>
    <property type="project" value="TreeGrafter"/>
</dbReference>
<dbReference type="GO" id="GO:0005524">
    <property type="term" value="F:ATP binding"/>
    <property type="evidence" value="ECO:0007669"/>
    <property type="project" value="UniProtKB-UniRule"/>
</dbReference>
<dbReference type="GO" id="GO:0003723">
    <property type="term" value="F:RNA binding"/>
    <property type="evidence" value="ECO:0007669"/>
    <property type="project" value="UniProtKB-KW"/>
</dbReference>
<dbReference type="GO" id="GO:0004831">
    <property type="term" value="F:tyrosine-tRNA ligase activity"/>
    <property type="evidence" value="ECO:0007669"/>
    <property type="project" value="UniProtKB-UniRule"/>
</dbReference>
<dbReference type="GO" id="GO:0006437">
    <property type="term" value="P:tyrosyl-tRNA aminoacylation"/>
    <property type="evidence" value="ECO:0007669"/>
    <property type="project" value="UniProtKB-UniRule"/>
</dbReference>
<dbReference type="CDD" id="cd00165">
    <property type="entry name" value="S4"/>
    <property type="match status" value="1"/>
</dbReference>
<dbReference type="CDD" id="cd00805">
    <property type="entry name" value="TyrRS_core"/>
    <property type="match status" value="1"/>
</dbReference>
<dbReference type="FunFam" id="1.10.240.10:FF:000001">
    <property type="entry name" value="Tyrosine--tRNA ligase"/>
    <property type="match status" value="1"/>
</dbReference>
<dbReference type="FunFam" id="3.10.290.10:FF:000007">
    <property type="entry name" value="Tyrosine--tRNA ligase"/>
    <property type="match status" value="1"/>
</dbReference>
<dbReference type="FunFam" id="3.40.50.620:FF:000008">
    <property type="entry name" value="Tyrosine--tRNA ligase"/>
    <property type="match status" value="1"/>
</dbReference>
<dbReference type="Gene3D" id="3.40.50.620">
    <property type="entry name" value="HUPs"/>
    <property type="match status" value="1"/>
</dbReference>
<dbReference type="Gene3D" id="3.10.290.10">
    <property type="entry name" value="RNA-binding S4 domain"/>
    <property type="match status" value="1"/>
</dbReference>
<dbReference type="Gene3D" id="1.10.240.10">
    <property type="entry name" value="Tyrosyl-Transfer RNA Synthetase"/>
    <property type="match status" value="1"/>
</dbReference>
<dbReference type="HAMAP" id="MF_02006">
    <property type="entry name" value="Tyr_tRNA_synth_type1"/>
    <property type="match status" value="1"/>
</dbReference>
<dbReference type="InterPro" id="IPR001412">
    <property type="entry name" value="aa-tRNA-synth_I_CS"/>
</dbReference>
<dbReference type="InterPro" id="IPR002305">
    <property type="entry name" value="aa-tRNA-synth_Ic"/>
</dbReference>
<dbReference type="InterPro" id="IPR014729">
    <property type="entry name" value="Rossmann-like_a/b/a_fold"/>
</dbReference>
<dbReference type="InterPro" id="IPR002942">
    <property type="entry name" value="S4_RNA-bd"/>
</dbReference>
<dbReference type="InterPro" id="IPR036986">
    <property type="entry name" value="S4_RNA-bd_sf"/>
</dbReference>
<dbReference type="InterPro" id="IPR054608">
    <property type="entry name" value="SYY-like_C"/>
</dbReference>
<dbReference type="InterPro" id="IPR002307">
    <property type="entry name" value="Tyr-tRNA-ligase"/>
</dbReference>
<dbReference type="InterPro" id="IPR024088">
    <property type="entry name" value="Tyr-tRNA-ligase_bac-type"/>
</dbReference>
<dbReference type="InterPro" id="IPR024107">
    <property type="entry name" value="Tyr-tRNA-ligase_bac_1"/>
</dbReference>
<dbReference type="NCBIfam" id="TIGR00234">
    <property type="entry name" value="tyrS"/>
    <property type="match status" value="1"/>
</dbReference>
<dbReference type="PANTHER" id="PTHR11766:SF0">
    <property type="entry name" value="TYROSINE--TRNA LIGASE, MITOCHONDRIAL"/>
    <property type="match status" value="1"/>
</dbReference>
<dbReference type="PANTHER" id="PTHR11766">
    <property type="entry name" value="TYROSYL-TRNA SYNTHETASE"/>
    <property type="match status" value="1"/>
</dbReference>
<dbReference type="Pfam" id="PF22421">
    <property type="entry name" value="SYY_C-terminal"/>
    <property type="match status" value="1"/>
</dbReference>
<dbReference type="Pfam" id="PF00579">
    <property type="entry name" value="tRNA-synt_1b"/>
    <property type="match status" value="1"/>
</dbReference>
<dbReference type="PRINTS" id="PR01040">
    <property type="entry name" value="TRNASYNTHTYR"/>
</dbReference>
<dbReference type="SMART" id="SM00363">
    <property type="entry name" value="S4"/>
    <property type="match status" value="1"/>
</dbReference>
<dbReference type="SUPFAM" id="SSF55174">
    <property type="entry name" value="Alpha-L RNA-binding motif"/>
    <property type="match status" value="1"/>
</dbReference>
<dbReference type="SUPFAM" id="SSF52374">
    <property type="entry name" value="Nucleotidylyl transferase"/>
    <property type="match status" value="1"/>
</dbReference>
<dbReference type="PROSITE" id="PS00178">
    <property type="entry name" value="AA_TRNA_LIGASE_I"/>
    <property type="match status" value="1"/>
</dbReference>
<dbReference type="PROSITE" id="PS50889">
    <property type="entry name" value="S4"/>
    <property type="match status" value="1"/>
</dbReference>
<name>SYY_SALG2</name>
<gene>
    <name evidence="1" type="primary">tyrS</name>
    <name type="ordered locus">SG1669</name>
</gene>
<organism>
    <name type="scientific">Salmonella gallinarum (strain 287/91 / NCTC 13346)</name>
    <dbReference type="NCBI Taxonomy" id="550538"/>
    <lineage>
        <taxon>Bacteria</taxon>
        <taxon>Pseudomonadati</taxon>
        <taxon>Pseudomonadota</taxon>
        <taxon>Gammaproteobacteria</taxon>
        <taxon>Enterobacterales</taxon>
        <taxon>Enterobacteriaceae</taxon>
        <taxon>Salmonella</taxon>
    </lineage>
</organism>
<proteinExistence type="inferred from homology"/>
<evidence type="ECO:0000255" key="1">
    <source>
        <dbReference type="HAMAP-Rule" id="MF_02006"/>
    </source>
</evidence>
<keyword id="KW-0030">Aminoacyl-tRNA synthetase</keyword>
<keyword id="KW-0067">ATP-binding</keyword>
<keyword id="KW-0963">Cytoplasm</keyword>
<keyword id="KW-0436">Ligase</keyword>
<keyword id="KW-0547">Nucleotide-binding</keyword>
<keyword id="KW-0648">Protein biosynthesis</keyword>
<keyword id="KW-0694">RNA-binding</keyword>
<accession>B5RAL0</accession>